<protein>
    <recommendedName>
        <fullName evidence="1">2-dehydro-3-deoxyphosphooctonate aldolase</fullName>
        <ecNumber evidence="1">2.5.1.55</ecNumber>
    </recommendedName>
    <alternativeName>
        <fullName evidence="1">3-deoxy-D-manno-octulosonic acid 8-phosphate synthase</fullName>
    </alternativeName>
    <alternativeName>
        <fullName evidence="1">KDO-8-phosphate synthase</fullName>
        <shortName evidence="1">KDO 8-P synthase</shortName>
        <shortName evidence="1">KDOPS</shortName>
    </alternativeName>
    <alternativeName>
        <fullName evidence="1">Phospho-2-dehydro-3-deoxyoctonate aldolase</fullName>
    </alternativeName>
</protein>
<reference key="1">
    <citation type="journal article" date="2006" name="PLoS Genet.">
        <title>Genome sequence of Rickettsia bellii illuminates the role of amoebae in gene exchanges between intracellular pathogens.</title>
        <authorList>
            <person name="Ogata H."/>
            <person name="La Scola B."/>
            <person name="Audic S."/>
            <person name="Renesto P."/>
            <person name="Blanc G."/>
            <person name="Robert C."/>
            <person name="Fournier P.-E."/>
            <person name="Claverie J.-M."/>
            <person name="Raoult D."/>
        </authorList>
    </citation>
    <scope>NUCLEOTIDE SEQUENCE [LARGE SCALE GENOMIC DNA]</scope>
    <source>
        <strain>RML369-C</strain>
    </source>
</reference>
<gene>
    <name evidence="1" type="primary">kdsA</name>
    <name type="ordered locus">RBE_1345</name>
</gene>
<keyword id="KW-0963">Cytoplasm</keyword>
<keyword id="KW-0448">Lipopolysaccharide biosynthesis</keyword>
<keyword id="KW-0808">Transferase</keyword>
<accession>Q1RGT8</accession>
<dbReference type="EC" id="2.5.1.55" evidence="1"/>
<dbReference type="EMBL" id="CP000087">
    <property type="protein sequence ID" value="ABE05426.1"/>
    <property type="molecule type" value="Genomic_DNA"/>
</dbReference>
<dbReference type="RefSeq" id="WP_011477995.1">
    <property type="nucleotide sequence ID" value="NC_007940.1"/>
</dbReference>
<dbReference type="SMR" id="Q1RGT8"/>
<dbReference type="KEGG" id="rbe:RBE_1345"/>
<dbReference type="eggNOG" id="COG2877">
    <property type="taxonomic scope" value="Bacteria"/>
</dbReference>
<dbReference type="HOGENOM" id="CLU_036666_0_0_5"/>
<dbReference type="OrthoDB" id="9776934at2"/>
<dbReference type="UniPathway" id="UPA00030"/>
<dbReference type="UniPathway" id="UPA00357">
    <property type="reaction ID" value="UER00474"/>
</dbReference>
<dbReference type="Proteomes" id="UP000001951">
    <property type="component" value="Chromosome"/>
</dbReference>
<dbReference type="GO" id="GO:0005737">
    <property type="term" value="C:cytoplasm"/>
    <property type="evidence" value="ECO:0007669"/>
    <property type="project" value="UniProtKB-SubCell"/>
</dbReference>
<dbReference type="GO" id="GO:0008676">
    <property type="term" value="F:3-deoxy-8-phosphooctulonate synthase activity"/>
    <property type="evidence" value="ECO:0007669"/>
    <property type="project" value="UniProtKB-UniRule"/>
</dbReference>
<dbReference type="GO" id="GO:0019294">
    <property type="term" value="P:keto-3-deoxy-D-manno-octulosonic acid biosynthetic process"/>
    <property type="evidence" value="ECO:0007669"/>
    <property type="project" value="UniProtKB-UniRule"/>
</dbReference>
<dbReference type="Gene3D" id="3.20.20.70">
    <property type="entry name" value="Aldolase class I"/>
    <property type="match status" value="1"/>
</dbReference>
<dbReference type="HAMAP" id="MF_00056">
    <property type="entry name" value="KDO8P_synth"/>
    <property type="match status" value="1"/>
</dbReference>
<dbReference type="InterPro" id="IPR013785">
    <property type="entry name" value="Aldolase_TIM"/>
</dbReference>
<dbReference type="InterPro" id="IPR006218">
    <property type="entry name" value="DAHP1/KDSA"/>
</dbReference>
<dbReference type="InterPro" id="IPR006269">
    <property type="entry name" value="KDO8P_synthase"/>
</dbReference>
<dbReference type="NCBIfam" id="TIGR01362">
    <property type="entry name" value="KDO8P_synth"/>
    <property type="match status" value="1"/>
</dbReference>
<dbReference type="NCBIfam" id="NF003543">
    <property type="entry name" value="PRK05198.1"/>
    <property type="match status" value="1"/>
</dbReference>
<dbReference type="PANTHER" id="PTHR21057">
    <property type="entry name" value="PHOSPHO-2-DEHYDRO-3-DEOXYHEPTONATE ALDOLASE"/>
    <property type="match status" value="1"/>
</dbReference>
<dbReference type="Pfam" id="PF00793">
    <property type="entry name" value="DAHP_synth_1"/>
    <property type="match status" value="1"/>
</dbReference>
<dbReference type="SUPFAM" id="SSF51569">
    <property type="entry name" value="Aldolase"/>
    <property type="match status" value="1"/>
</dbReference>
<comment type="catalytic activity">
    <reaction evidence="1">
        <text>D-arabinose 5-phosphate + phosphoenolpyruvate + H2O = 3-deoxy-alpha-D-manno-2-octulosonate-8-phosphate + phosphate</text>
        <dbReference type="Rhea" id="RHEA:14053"/>
        <dbReference type="ChEBI" id="CHEBI:15377"/>
        <dbReference type="ChEBI" id="CHEBI:43474"/>
        <dbReference type="ChEBI" id="CHEBI:57693"/>
        <dbReference type="ChEBI" id="CHEBI:58702"/>
        <dbReference type="ChEBI" id="CHEBI:85985"/>
        <dbReference type="EC" id="2.5.1.55"/>
    </reaction>
</comment>
<comment type="pathway">
    <text evidence="1">Carbohydrate biosynthesis; 3-deoxy-D-manno-octulosonate biosynthesis; 3-deoxy-D-manno-octulosonate from D-ribulose 5-phosphate: step 2/3.</text>
</comment>
<comment type="pathway">
    <text evidence="1">Bacterial outer membrane biogenesis; lipopolysaccharide biosynthesis.</text>
</comment>
<comment type="subcellular location">
    <subcellularLocation>
        <location evidence="1">Cytoplasm</location>
    </subcellularLocation>
</comment>
<comment type="similarity">
    <text evidence="1">Belongs to the KdsA family.</text>
</comment>
<organism>
    <name type="scientific">Rickettsia bellii (strain RML369-C)</name>
    <dbReference type="NCBI Taxonomy" id="336407"/>
    <lineage>
        <taxon>Bacteria</taxon>
        <taxon>Pseudomonadati</taxon>
        <taxon>Pseudomonadota</taxon>
        <taxon>Alphaproteobacteria</taxon>
        <taxon>Rickettsiales</taxon>
        <taxon>Rickettsiaceae</taxon>
        <taxon>Rickettsieae</taxon>
        <taxon>Rickettsia</taxon>
        <taxon>belli group</taxon>
    </lineage>
</organism>
<sequence length="274" mass="29985">MQKIIKLKDLKIGNDLPFTLIAGPCQIEGLDHALFMAEELVKLTTRLNIPFIYKSSFDKANRTSVNGARGLGIDKGLEVLAEVKRAFNCPIVTDVHSENQCAEVAKIVDMLQIPAFLCRQTDLLQAAAATGKIVNVKKGQFLAPWDMKNVHKKLESFGAKDILLTERGTCFGYNNLVSDMRGLAIMAELNTPVIFDATHSVQQPGGLGGSTGGERKYVELLAKAAVAVGVAGLYMEVHQDPDNAPSDGPCMIRLDNLERVLTKLKKYDEITKEK</sequence>
<proteinExistence type="inferred from homology"/>
<name>KDSA_RICBR</name>
<feature type="chain" id="PRO_0000277911" description="2-dehydro-3-deoxyphosphooctonate aldolase">
    <location>
        <begin position="1"/>
        <end position="274"/>
    </location>
</feature>
<evidence type="ECO:0000255" key="1">
    <source>
        <dbReference type="HAMAP-Rule" id="MF_00056"/>
    </source>
</evidence>